<evidence type="ECO:0000250" key="1">
    <source>
        <dbReference type="UniProtKB" id="P0CE72"/>
    </source>
</evidence>
<evidence type="ECO:0000255" key="2">
    <source>
        <dbReference type="PROSITE-ProRule" id="PRU00448"/>
    </source>
</evidence>
<evidence type="ECO:0000305" key="3"/>
<keyword id="KW-0106">Calcium</keyword>
<keyword id="KW-0479">Metal-binding</keyword>
<keyword id="KW-1185">Reference proteome</keyword>
<keyword id="KW-0677">Repeat</keyword>
<reference key="1">
    <citation type="journal article" date="2003" name="Nature">
        <title>The DNA sequence of human chromosome 7.</title>
        <authorList>
            <person name="Hillier L.W."/>
            <person name="Fulton R.S."/>
            <person name="Fulton L.A."/>
            <person name="Graves T.A."/>
            <person name="Pepin K.H."/>
            <person name="Wagner-McPherson C."/>
            <person name="Layman D."/>
            <person name="Maas J."/>
            <person name="Jaeger S."/>
            <person name="Walker R."/>
            <person name="Wylie K."/>
            <person name="Sekhon M."/>
            <person name="Becker M.C."/>
            <person name="O'Laughlin M.D."/>
            <person name="Schaller M.E."/>
            <person name="Fewell G.A."/>
            <person name="Delehaunty K.D."/>
            <person name="Miner T.L."/>
            <person name="Nash W.E."/>
            <person name="Cordes M."/>
            <person name="Du H."/>
            <person name="Sun H."/>
            <person name="Edwards J."/>
            <person name="Bradshaw-Cordum H."/>
            <person name="Ali J."/>
            <person name="Andrews S."/>
            <person name="Isak A."/>
            <person name="Vanbrunt A."/>
            <person name="Nguyen C."/>
            <person name="Du F."/>
            <person name="Lamar B."/>
            <person name="Courtney L."/>
            <person name="Kalicki J."/>
            <person name="Ozersky P."/>
            <person name="Bielicki L."/>
            <person name="Scott K."/>
            <person name="Holmes A."/>
            <person name="Harkins R."/>
            <person name="Harris A."/>
            <person name="Strong C.M."/>
            <person name="Hou S."/>
            <person name="Tomlinson C."/>
            <person name="Dauphin-Kohlberg S."/>
            <person name="Kozlowicz-Reilly A."/>
            <person name="Leonard S."/>
            <person name="Rohlfing T."/>
            <person name="Rock S.M."/>
            <person name="Tin-Wollam A.-M."/>
            <person name="Abbott A."/>
            <person name="Minx P."/>
            <person name="Maupin R."/>
            <person name="Strowmatt C."/>
            <person name="Latreille P."/>
            <person name="Miller N."/>
            <person name="Johnson D."/>
            <person name="Murray J."/>
            <person name="Woessner J.P."/>
            <person name="Wendl M.C."/>
            <person name="Yang S.-P."/>
            <person name="Schultz B.R."/>
            <person name="Wallis J.W."/>
            <person name="Spieth J."/>
            <person name="Bieri T.A."/>
            <person name="Nelson J.O."/>
            <person name="Berkowicz N."/>
            <person name="Wohldmann P.E."/>
            <person name="Cook L.L."/>
            <person name="Hickenbotham M.T."/>
            <person name="Eldred J."/>
            <person name="Williams D."/>
            <person name="Bedell J.A."/>
            <person name="Mardis E.R."/>
            <person name="Clifton S.W."/>
            <person name="Chissoe S.L."/>
            <person name="Marra M.A."/>
            <person name="Raymond C."/>
            <person name="Haugen E."/>
            <person name="Gillett W."/>
            <person name="Zhou Y."/>
            <person name="James R."/>
            <person name="Phelps K."/>
            <person name="Iadanoto S."/>
            <person name="Bubb K."/>
            <person name="Simms E."/>
            <person name="Levy R."/>
            <person name="Clendenning J."/>
            <person name="Kaul R."/>
            <person name="Kent W.J."/>
            <person name="Furey T.S."/>
            <person name="Baertsch R.A."/>
            <person name="Brent M.R."/>
            <person name="Keibler E."/>
            <person name="Flicek P."/>
            <person name="Bork P."/>
            <person name="Suyama M."/>
            <person name="Bailey J.A."/>
            <person name="Portnoy M.E."/>
            <person name="Torrents D."/>
            <person name="Chinwalla A.T."/>
            <person name="Gish W.R."/>
            <person name="Eddy S.R."/>
            <person name="McPherson J.D."/>
            <person name="Olson M.V."/>
            <person name="Eichler E.E."/>
            <person name="Green E.D."/>
            <person name="Waterston R.H."/>
            <person name="Wilson R.K."/>
        </authorList>
    </citation>
    <scope>NUCLEOTIDE SEQUENCE [LARGE SCALE GENOMIC DNA]</scope>
</reference>
<proteinExistence type="inferred from homology"/>
<gene>
    <name type="primary">OCM2</name>
    <name type="synonym">OCMN</name>
</gene>
<feature type="chain" id="PRO_0000392643" description="Oncomodulin-2">
    <location>
        <begin position="1"/>
        <end position="109"/>
    </location>
</feature>
<feature type="domain" description="EF-hand 1" evidence="2">
    <location>
        <begin position="39"/>
        <end position="74"/>
    </location>
</feature>
<feature type="domain" description="EF-hand 2" evidence="2">
    <location>
        <begin position="78"/>
        <end position="109"/>
    </location>
</feature>
<feature type="binding site" evidence="1 2">
    <location>
        <position position="52"/>
    </location>
    <ligand>
        <name>Ca(2+)</name>
        <dbReference type="ChEBI" id="CHEBI:29108"/>
        <label>1</label>
    </ligand>
</feature>
<feature type="binding site" evidence="2">
    <location>
        <position position="54"/>
    </location>
    <ligand>
        <name>Ca(2+)</name>
        <dbReference type="ChEBI" id="CHEBI:29108"/>
        <label>1</label>
    </ligand>
</feature>
<feature type="binding site" evidence="1 2">
    <location>
        <position position="56"/>
    </location>
    <ligand>
        <name>Ca(2+)</name>
        <dbReference type="ChEBI" id="CHEBI:29108"/>
        <label>1</label>
    </ligand>
</feature>
<feature type="binding site" evidence="1 2">
    <location>
        <position position="58"/>
    </location>
    <ligand>
        <name>Ca(2+)</name>
        <dbReference type="ChEBI" id="CHEBI:29108"/>
        <label>1</label>
    </ligand>
</feature>
<feature type="binding site" evidence="1 2">
    <location>
        <position position="63"/>
    </location>
    <ligand>
        <name>Ca(2+)</name>
        <dbReference type="ChEBI" id="CHEBI:29108"/>
        <label>1</label>
    </ligand>
</feature>
<feature type="binding site" evidence="2">
    <location>
        <position position="91"/>
    </location>
    <ligand>
        <name>Ca(2+)</name>
        <dbReference type="ChEBI" id="CHEBI:29108"/>
        <label>2</label>
    </ligand>
</feature>
<feature type="binding site" evidence="1 2">
    <location>
        <position position="93"/>
    </location>
    <ligand>
        <name>Ca(2+)</name>
        <dbReference type="ChEBI" id="CHEBI:29108"/>
        <label>2</label>
    </ligand>
</feature>
<feature type="binding site" evidence="1 2">
    <location>
        <position position="95"/>
    </location>
    <ligand>
        <name>Ca(2+)</name>
        <dbReference type="ChEBI" id="CHEBI:29108"/>
        <label>2</label>
    </ligand>
</feature>
<feature type="binding site" evidence="1 2">
    <location>
        <position position="97"/>
    </location>
    <ligand>
        <name>Ca(2+)</name>
        <dbReference type="ChEBI" id="CHEBI:29108"/>
        <label>2</label>
    </ligand>
</feature>
<feature type="binding site" evidence="1 2">
    <location>
        <position position="102"/>
    </location>
    <ligand>
        <name>Ca(2+)</name>
        <dbReference type="ChEBI" id="CHEBI:29108"/>
        <label>2</label>
    </ligand>
</feature>
<protein>
    <recommendedName>
        <fullName>Oncomodulin-2</fullName>
    </recommendedName>
</protein>
<name>OCM2_HUMAN</name>
<accession>P0CE71</accession>
<accession>P32930</accession>
<accession>Q6ISI5</accession>
<accession>Q75MW0</accession>
<dbReference type="EMBL" id="AC004967">
    <property type="protein sequence ID" value="AAQ96880.1"/>
    <property type="molecule type" value="Genomic_DNA"/>
</dbReference>
<dbReference type="CCDS" id="CCDS5653.1"/>
<dbReference type="RefSeq" id="NP_006179.2">
    <property type="nucleotide sequence ID" value="NM_006188.4"/>
</dbReference>
<dbReference type="BMRB" id="P0CE71"/>
<dbReference type="SMR" id="P0CE71"/>
<dbReference type="BioGRID" id="111005">
    <property type="interactions" value="10"/>
</dbReference>
<dbReference type="FunCoup" id="P0CE71">
    <property type="interactions" value="5"/>
</dbReference>
<dbReference type="IntAct" id="P0CE71">
    <property type="interactions" value="7"/>
</dbReference>
<dbReference type="STRING" id="9606.ENSP00000257627"/>
<dbReference type="iPTMnet" id="P0CE71"/>
<dbReference type="PhosphoSitePlus" id="P0CE71"/>
<dbReference type="BioMuta" id="OCM2"/>
<dbReference type="DMDM" id="292630842"/>
<dbReference type="MassIVE" id="P0CE71"/>
<dbReference type="PaxDb" id="9606-ENSP00000257627"/>
<dbReference type="PeptideAtlas" id="P0CE71"/>
<dbReference type="Antibodypedia" id="30217">
    <property type="antibodies" value="14 antibodies from 9 providers"/>
</dbReference>
<dbReference type="DNASU" id="4951"/>
<dbReference type="Ensembl" id="ENST00000257627.5">
    <property type="protein sequence ID" value="ENSP00000257627.4"/>
    <property type="gene ID" value="ENSG00000135175.6"/>
</dbReference>
<dbReference type="GeneID" id="4951"/>
<dbReference type="KEGG" id="hsa:4951"/>
<dbReference type="MANE-Select" id="ENST00000257627.5">
    <property type="protein sequence ID" value="ENSP00000257627.4"/>
    <property type="RefSeq nucleotide sequence ID" value="NM_006188.4"/>
    <property type="RefSeq protein sequence ID" value="NP_006179.2"/>
</dbReference>
<dbReference type="UCSC" id="uc003upc.4">
    <property type="organism name" value="human"/>
</dbReference>
<dbReference type="AGR" id="HGNC:34396"/>
<dbReference type="CTD" id="4951"/>
<dbReference type="GeneCards" id="OCM2"/>
<dbReference type="HGNC" id="HGNC:34396">
    <property type="gene designation" value="OCM2"/>
</dbReference>
<dbReference type="HPA" id="ENSG00000135175">
    <property type="expression patterns" value="Not detected"/>
</dbReference>
<dbReference type="MIM" id="620522">
    <property type="type" value="gene"/>
</dbReference>
<dbReference type="neXtProt" id="NX_P0CE71"/>
<dbReference type="OpenTargets" id="ENSG00000135175"/>
<dbReference type="PharmGKB" id="PA164724233"/>
<dbReference type="VEuPathDB" id="HostDB:ENSG00000135175"/>
<dbReference type="eggNOG" id="KOG0027">
    <property type="taxonomic scope" value="Eukaryota"/>
</dbReference>
<dbReference type="GeneTree" id="ENSGT00940000161875"/>
<dbReference type="HOGENOM" id="CLU_157356_0_0_1"/>
<dbReference type="InParanoid" id="P0CE71"/>
<dbReference type="OMA" id="CTCISIL"/>
<dbReference type="OrthoDB" id="9529109at2759"/>
<dbReference type="PAN-GO" id="P0CE71">
    <property type="GO annotations" value="3 GO annotations based on evolutionary models"/>
</dbReference>
<dbReference type="PhylomeDB" id="P0CE71"/>
<dbReference type="TreeFam" id="TF332342"/>
<dbReference type="PathwayCommons" id="P0CE71"/>
<dbReference type="SignaLink" id="P0CE71"/>
<dbReference type="BioGRID-ORCS" id="4951">
    <property type="hits" value="30 hits in 1033 CRISPR screens"/>
</dbReference>
<dbReference type="GeneWiki" id="LOC4951"/>
<dbReference type="GenomeRNAi" id="4951"/>
<dbReference type="Pharos" id="P0CE71">
    <property type="development level" value="Tdark"/>
</dbReference>
<dbReference type="PRO" id="PR:P0CE71"/>
<dbReference type="Proteomes" id="UP000005640">
    <property type="component" value="Chromosome 7"/>
</dbReference>
<dbReference type="RNAct" id="P0CE71">
    <property type="molecule type" value="protein"/>
</dbReference>
<dbReference type="Bgee" id="ENSG00000135175">
    <property type="expression patterns" value="Expressed in male germ line stem cell (sensu Vertebrata) in testis and 26 other cell types or tissues"/>
</dbReference>
<dbReference type="GO" id="GO:0005737">
    <property type="term" value="C:cytoplasm"/>
    <property type="evidence" value="ECO:0000318"/>
    <property type="project" value="GO_Central"/>
</dbReference>
<dbReference type="GO" id="GO:0005509">
    <property type="term" value="F:calcium ion binding"/>
    <property type="evidence" value="ECO:0000318"/>
    <property type="project" value="GO_Central"/>
</dbReference>
<dbReference type="CDD" id="cd16255">
    <property type="entry name" value="EFh_parvalbumin_beta"/>
    <property type="match status" value="1"/>
</dbReference>
<dbReference type="FunFam" id="1.10.238.10:FF:000060">
    <property type="entry name" value="Parvalbumin, thymic"/>
    <property type="match status" value="1"/>
</dbReference>
<dbReference type="Gene3D" id="1.10.238.10">
    <property type="entry name" value="EF-hand"/>
    <property type="match status" value="1"/>
</dbReference>
<dbReference type="InterPro" id="IPR011992">
    <property type="entry name" value="EF-hand-dom_pair"/>
</dbReference>
<dbReference type="InterPro" id="IPR018247">
    <property type="entry name" value="EF_Hand_1_Ca_BS"/>
</dbReference>
<dbReference type="InterPro" id="IPR002048">
    <property type="entry name" value="EF_hand_dom"/>
</dbReference>
<dbReference type="InterPro" id="IPR008080">
    <property type="entry name" value="Parvalbumin"/>
</dbReference>
<dbReference type="PANTHER" id="PTHR11653:SF4">
    <property type="entry name" value="ONCOMODULIN-2-RELATED"/>
    <property type="match status" value="1"/>
</dbReference>
<dbReference type="PANTHER" id="PTHR11653">
    <property type="entry name" value="PARVALBUMIN ALPHA"/>
    <property type="match status" value="1"/>
</dbReference>
<dbReference type="Pfam" id="PF13499">
    <property type="entry name" value="EF-hand_7"/>
    <property type="match status" value="1"/>
</dbReference>
<dbReference type="PRINTS" id="PR01697">
    <property type="entry name" value="PARVALBUMIN"/>
</dbReference>
<dbReference type="SMART" id="SM00054">
    <property type="entry name" value="EFh"/>
    <property type="match status" value="2"/>
</dbReference>
<dbReference type="SUPFAM" id="SSF47473">
    <property type="entry name" value="EF-hand"/>
    <property type="match status" value="1"/>
</dbReference>
<dbReference type="PROSITE" id="PS00018">
    <property type="entry name" value="EF_HAND_1"/>
    <property type="match status" value="2"/>
</dbReference>
<dbReference type="PROSITE" id="PS50222">
    <property type="entry name" value="EF_HAND_2"/>
    <property type="match status" value="2"/>
</dbReference>
<sequence>MSITDVLSADDIAAALQECQDPDTFEPQKFFQTSGLSKMSASQVKDVFRFIDNDQSGYLDEEELKFFLQKFESGARELTESETKSLMAAADNDGDGKIGAEEFQEMVHS</sequence>
<organism>
    <name type="scientific">Homo sapiens</name>
    <name type="common">Human</name>
    <dbReference type="NCBI Taxonomy" id="9606"/>
    <lineage>
        <taxon>Eukaryota</taxon>
        <taxon>Metazoa</taxon>
        <taxon>Chordata</taxon>
        <taxon>Craniata</taxon>
        <taxon>Vertebrata</taxon>
        <taxon>Euteleostomi</taxon>
        <taxon>Mammalia</taxon>
        <taxon>Eutheria</taxon>
        <taxon>Euarchontoglires</taxon>
        <taxon>Primates</taxon>
        <taxon>Haplorrhini</taxon>
        <taxon>Catarrhini</taxon>
        <taxon>Hominidae</taxon>
        <taxon>Homo</taxon>
    </lineage>
</organism>
<comment type="similarity">
    <text evidence="3">Belongs to the parvalbumin family.</text>
</comment>